<reference key="1">
    <citation type="journal article" date="2002" name="Genome Res.">
        <title>The genome of Methanosarcina acetivorans reveals extensive metabolic and physiological diversity.</title>
        <authorList>
            <person name="Galagan J.E."/>
            <person name="Nusbaum C."/>
            <person name="Roy A."/>
            <person name="Endrizzi M.G."/>
            <person name="Macdonald P."/>
            <person name="FitzHugh W."/>
            <person name="Calvo S."/>
            <person name="Engels R."/>
            <person name="Smirnov S."/>
            <person name="Atnoor D."/>
            <person name="Brown A."/>
            <person name="Allen N."/>
            <person name="Naylor J."/>
            <person name="Stange-Thomann N."/>
            <person name="DeArellano K."/>
            <person name="Johnson R."/>
            <person name="Linton L."/>
            <person name="McEwan P."/>
            <person name="McKernan K."/>
            <person name="Talamas J."/>
            <person name="Tirrell A."/>
            <person name="Ye W."/>
            <person name="Zimmer A."/>
            <person name="Barber R.D."/>
            <person name="Cann I."/>
            <person name="Graham D.E."/>
            <person name="Grahame D.A."/>
            <person name="Guss A.M."/>
            <person name="Hedderich R."/>
            <person name="Ingram-Smith C."/>
            <person name="Kuettner H.C."/>
            <person name="Krzycki J.A."/>
            <person name="Leigh J.A."/>
            <person name="Li W."/>
            <person name="Liu J."/>
            <person name="Mukhopadhyay B."/>
            <person name="Reeve J.N."/>
            <person name="Smith K."/>
            <person name="Springer T.A."/>
            <person name="Umayam L.A."/>
            <person name="White O."/>
            <person name="White R.H."/>
            <person name="de Macario E.C."/>
            <person name="Ferry J.G."/>
            <person name="Jarrell K.F."/>
            <person name="Jing H."/>
            <person name="Macario A.J.L."/>
            <person name="Paulsen I.T."/>
            <person name="Pritchett M."/>
            <person name="Sowers K.R."/>
            <person name="Swanson R.V."/>
            <person name="Zinder S.H."/>
            <person name="Lander E."/>
            <person name="Metcalf W.W."/>
            <person name="Birren B."/>
        </authorList>
    </citation>
    <scope>NUCLEOTIDE SEQUENCE [LARGE SCALE GENOMIC DNA]</scope>
    <source>
        <strain>ATCC 35395 / DSM 2834 / JCM 12185 / C2A</strain>
    </source>
</reference>
<evidence type="ECO:0000255" key="1">
    <source>
        <dbReference type="HAMAP-Rule" id="MF_00512"/>
    </source>
</evidence>
<evidence type="ECO:0000305" key="2"/>
<feature type="chain" id="PRO_0000137347" description="Small ribosomal subunit protein eS6">
    <location>
        <begin position="1"/>
        <end position="136"/>
    </location>
</feature>
<keyword id="KW-1185">Reference proteome</keyword>
<keyword id="KW-0687">Ribonucleoprotein</keyword>
<keyword id="KW-0689">Ribosomal protein</keyword>
<comment type="similarity">
    <text evidence="1">Belongs to the eukaryotic ribosomal protein eS6 family.</text>
</comment>
<gene>
    <name evidence="1" type="primary">rps6e</name>
    <name type="ordered locus">MA_1526</name>
</gene>
<name>RS6E_METAC</name>
<proteinExistence type="inferred from homology"/>
<accession>Q8TQL4</accession>
<organism>
    <name type="scientific">Methanosarcina acetivorans (strain ATCC 35395 / DSM 2834 / JCM 12185 / C2A)</name>
    <dbReference type="NCBI Taxonomy" id="188937"/>
    <lineage>
        <taxon>Archaea</taxon>
        <taxon>Methanobacteriati</taxon>
        <taxon>Methanobacteriota</taxon>
        <taxon>Stenosarchaea group</taxon>
        <taxon>Methanomicrobia</taxon>
        <taxon>Methanosarcinales</taxon>
        <taxon>Methanosarcinaceae</taxon>
        <taxon>Methanosarcina</taxon>
    </lineage>
</organism>
<protein>
    <recommendedName>
        <fullName evidence="1">Small ribosomal subunit protein eS6</fullName>
    </recommendedName>
    <alternativeName>
        <fullName evidence="2">30S ribosomal protein S6e</fullName>
    </alternativeName>
</protein>
<sequence length="136" mass="14455">MANFKVVVSDPKEGRAYQIDIKDAEANALIGKAIGDVVDGAIFGLAGYKVQITGGCDGSGFVMKPDLPGPRRQRILTATGVGYVPKLPGQRRRKMMRGKEIAPDIIQVNAKIVEYGSKSIKALLGLETAEEAPAAE</sequence>
<dbReference type="EMBL" id="AE010299">
    <property type="protein sequence ID" value="AAM04940.1"/>
    <property type="molecule type" value="Genomic_DNA"/>
</dbReference>
<dbReference type="RefSeq" id="WP_011021540.1">
    <property type="nucleotide sequence ID" value="NC_003552.1"/>
</dbReference>
<dbReference type="SMR" id="Q8TQL4"/>
<dbReference type="FunCoup" id="Q8TQL4">
    <property type="interactions" value="128"/>
</dbReference>
<dbReference type="STRING" id="188937.MA_1526"/>
<dbReference type="EnsemblBacteria" id="AAM04940">
    <property type="protein sequence ID" value="AAM04940"/>
    <property type="gene ID" value="MA_1526"/>
</dbReference>
<dbReference type="GeneID" id="1473414"/>
<dbReference type="KEGG" id="mac:MA_1526"/>
<dbReference type="HOGENOM" id="CLU_109671_1_1_2"/>
<dbReference type="InParanoid" id="Q8TQL4"/>
<dbReference type="OrthoDB" id="7793at2157"/>
<dbReference type="PhylomeDB" id="Q8TQL4"/>
<dbReference type="Proteomes" id="UP000002487">
    <property type="component" value="Chromosome"/>
</dbReference>
<dbReference type="GO" id="GO:1990904">
    <property type="term" value="C:ribonucleoprotein complex"/>
    <property type="evidence" value="ECO:0007669"/>
    <property type="project" value="UniProtKB-KW"/>
</dbReference>
<dbReference type="GO" id="GO:0005840">
    <property type="term" value="C:ribosome"/>
    <property type="evidence" value="ECO:0007669"/>
    <property type="project" value="UniProtKB-KW"/>
</dbReference>
<dbReference type="GO" id="GO:0003735">
    <property type="term" value="F:structural constituent of ribosome"/>
    <property type="evidence" value="ECO:0007669"/>
    <property type="project" value="InterPro"/>
</dbReference>
<dbReference type="GO" id="GO:0006412">
    <property type="term" value="P:translation"/>
    <property type="evidence" value="ECO:0007669"/>
    <property type="project" value="UniProtKB-UniRule"/>
</dbReference>
<dbReference type="HAMAP" id="MF_00512">
    <property type="entry name" value="Ribosomal_eS6"/>
    <property type="match status" value="1"/>
</dbReference>
<dbReference type="InterPro" id="IPR001377">
    <property type="entry name" value="Ribosomal_eS6"/>
</dbReference>
<dbReference type="InterPro" id="IPR020924">
    <property type="entry name" value="Ribosomal_eS6_arc"/>
</dbReference>
<dbReference type="InterPro" id="IPR018282">
    <property type="entry name" value="Ribosomal_eS6_CS"/>
</dbReference>
<dbReference type="NCBIfam" id="NF003294">
    <property type="entry name" value="PRK04290.1-3"/>
    <property type="match status" value="1"/>
</dbReference>
<dbReference type="PANTHER" id="PTHR11502">
    <property type="entry name" value="40S RIBOSOMAL PROTEIN S6"/>
    <property type="match status" value="1"/>
</dbReference>
<dbReference type="Pfam" id="PF01092">
    <property type="entry name" value="Ribosomal_S6e"/>
    <property type="match status" value="1"/>
</dbReference>
<dbReference type="SMART" id="SM01405">
    <property type="entry name" value="Ribosomal_S6e"/>
    <property type="match status" value="1"/>
</dbReference>
<dbReference type="PROSITE" id="PS00578">
    <property type="entry name" value="RIBOSOMAL_S6E"/>
    <property type="match status" value="1"/>
</dbReference>